<keyword id="KW-0963">Cytoplasm</keyword>
<keyword id="KW-0489">Methyltransferase</keyword>
<keyword id="KW-0698">rRNA processing</keyword>
<keyword id="KW-0949">S-adenosyl-L-methionine</keyword>
<keyword id="KW-0808">Transferase</keyword>
<evidence type="ECO:0000255" key="1">
    <source>
        <dbReference type="HAMAP-Rule" id="MF_00658"/>
    </source>
</evidence>
<protein>
    <recommendedName>
        <fullName evidence="1">Ribosomal RNA large subunit methyltransferase H</fullName>
        <ecNumber evidence="1">2.1.1.177</ecNumber>
    </recommendedName>
    <alternativeName>
        <fullName evidence="1">23S rRNA (pseudouridine1915-N3)-methyltransferase</fullName>
    </alternativeName>
    <alternativeName>
        <fullName evidence="1">23S rRNA m3Psi1915 methyltransferase</fullName>
    </alternativeName>
    <alternativeName>
        <fullName evidence="1">rRNA (pseudouridine-N3-)-methyltransferase RlmH</fullName>
    </alternativeName>
</protein>
<sequence>MKLQLVAVGTKMPDWVQTGFTDYLRRFPKDMPFELLEIPAGKRGKNADIKRILEREGEQMLAAVGKGNRIVTLDIPGTRWETPQLAQQLERWKQDGRDVSLLIGGPEGLAPECKAAAEQSWSLSPLTLPHPLVRVLVAESLYRAWSITTNHPYHRE</sequence>
<organism>
    <name type="scientific">Pectobacterium carotovorum subsp. carotovorum (strain PC1)</name>
    <dbReference type="NCBI Taxonomy" id="561230"/>
    <lineage>
        <taxon>Bacteria</taxon>
        <taxon>Pseudomonadati</taxon>
        <taxon>Pseudomonadota</taxon>
        <taxon>Gammaproteobacteria</taxon>
        <taxon>Enterobacterales</taxon>
        <taxon>Pectobacteriaceae</taxon>
        <taxon>Pectobacterium</taxon>
    </lineage>
</organism>
<dbReference type="EC" id="2.1.1.177" evidence="1"/>
<dbReference type="EMBL" id="CP001657">
    <property type="protein sequence ID" value="ACT12230.1"/>
    <property type="molecule type" value="Genomic_DNA"/>
</dbReference>
<dbReference type="RefSeq" id="WP_015730925.1">
    <property type="nucleotide sequence ID" value="NC_012917.1"/>
</dbReference>
<dbReference type="SMR" id="C6DBW3"/>
<dbReference type="STRING" id="561230.PC1_1182"/>
<dbReference type="GeneID" id="90762600"/>
<dbReference type="KEGG" id="pct:PC1_1182"/>
<dbReference type="eggNOG" id="COG1576">
    <property type="taxonomic scope" value="Bacteria"/>
</dbReference>
<dbReference type="HOGENOM" id="CLU_100552_1_0_6"/>
<dbReference type="OrthoDB" id="9806643at2"/>
<dbReference type="Proteomes" id="UP000002736">
    <property type="component" value="Chromosome"/>
</dbReference>
<dbReference type="GO" id="GO:0005737">
    <property type="term" value="C:cytoplasm"/>
    <property type="evidence" value="ECO:0007669"/>
    <property type="project" value="UniProtKB-SubCell"/>
</dbReference>
<dbReference type="GO" id="GO:0070038">
    <property type="term" value="F:rRNA (pseudouridine-N3-)-methyltransferase activity"/>
    <property type="evidence" value="ECO:0007669"/>
    <property type="project" value="UniProtKB-UniRule"/>
</dbReference>
<dbReference type="CDD" id="cd18081">
    <property type="entry name" value="RlmH-like"/>
    <property type="match status" value="1"/>
</dbReference>
<dbReference type="FunFam" id="3.40.1280.10:FF:000004">
    <property type="entry name" value="Ribosomal RNA large subunit methyltransferase H"/>
    <property type="match status" value="1"/>
</dbReference>
<dbReference type="Gene3D" id="3.40.1280.10">
    <property type="match status" value="1"/>
</dbReference>
<dbReference type="HAMAP" id="MF_00658">
    <property type="entry name" value="23SrRNA_methyltr_H"/>
    <property type="match status" value="1"/>
</dbReference>
<dbReference type="InterPro" id="IPR029028">
    <property type="entry name" value="Alpha/beta_knot_MTases"/>
</dbReference>
<dbReference type="InterPro" id="IPR003742">
    <property type="entry name" value="RlmH-like"/>
</dbReference>
<dbReference type="InterPro" id="IPR029026">
    <property type="entry name" value="tRNA_m1G_MTases_N"/>
</dbReference>
<dbReference type="NCBIfam" id="NF000984">
    <property type="entry name" value="PRK00103.1-1"/>
    <property type="match status" value="1"/>
</dbReference>
<dbReference type="NCBIfam" id="NF000986">
    <property type="entry name" value="PRK00103.1-4"/>
    <property type="match status" value="1"/>
</dbReference>
<dbReference type="NCBIfam" id="TIGR00246">
    <property type="entry name" value="tRNA_RlmH_YbeA"/>
    <property type="match status" value="1"/>
</dbReference>
<dbReference type="PANTHER" id="PTHR33603">
    <property type="entry name" value="METHYLTRANSFERASE"/>
    <property type="match status" value="1"/>
</dbReference>
<dbReference type="PANTHER" id="PTHR33603:SF1">
    <property type="entry name" value="RIBOSOMAL RNA LARGE SUBUNIT METHYLTRANSFERASE H"/>
    <property type="match status" value="1"/>
</dbReference>
<dbReference type="Pfam" id="PF02590">
    <property type="entry name" value="SPOUT_MTase"/>
    <property type="match status" value="1"/>
</dbReference>
<dbReference type="PIRSF" id="PIRSF004505">
    <property type="entry name" value="MT_bac"/>
    <property type="match status" value="1"/>
</dbReference>
<dbReference type="SUPFAM" id="SSF75217">
    <property type="entry name" value="alpha/beta knot"/>
    <property type="match status" value="1"/>
</dbReference>
<reference key="1">
    <citation type="submission" date="2009-07" db="EMBL/GenBank/DDBJ databases">
        <title>Complete sequence of Pectobacterium carotovorum subsp. carotovorum PC1.</title>
        <authorList>
            <consortium name="US DOE Joint Genome Institute"/>
            <person name="Lucas S."/>
            <person name="Copeland A."/>
            <person name="Lapidus A."/>
            <person name="Glavina del Rio T."/>
            <person name="Tice H."/>
            <person name="Bruce D."/>
            <person name="Goodwin L."/>
            <person name="Pitluck S."/>
            <person name="Munk A.C."/>
            <person name="Brettin T."/>
            <person name="Detter J.C."/>
            <person name="Han C."/>
            <person name="Tapia R."/>
            <person name="Larimer F."/>
            <person name="Land M."/>
            <person name="Hauser L."/>
            <person name="Kyrpides N."/>
            <person name="Mikhailova N."/>
            <person name="Balakrishnan V."/>
            <person name="Glasner J."/>
            <person name="Perna N.T."/>
        </authorList>
    </citation>
    <scope>NUCLEOTIDE SEQUENCE [LARGE SCALE GENOMIC DNA]</scope>
    <source>
        <strain>PC1</strain>
    </source>
</reference>
<name>RLMH_PECCP</name>
<proteinExistence type="inferred from homology"/>
<comment type="function">
    <text evidence="1">Specifically methylates the pseudouridine at position 1915 (m3Psi1915) in 23S rRNA.</text>
</comment>
<comment type="catalytic activity">
    <reaction evidence="1">
        <text>pseudouridine(1915) in 23S rRNA + S-adenosyl-L-methionine = N(3)-methylpseudouridine(1915) in 23S rRNA + S-adenosyl-L-homocysteine + H(+)</text>
        <dbReference type="Rhea" id="RHEA:42752"/>
        <dbReference type="Rhea" id="RHEA-COMP:10221"/>
        <dbReference type="Rhea" id="RHEA-COMP:10222"/>
        <dbReference type="ChEBI" id="CHEBI:15378"/>
        <dbReference type="ChEBI" id="CHEBI:57856"/>
        <dbReference type="ChEBI" id="CHEBI:59789"/>
        <dbReference type="ChEBI" id="CHEBI:65314"/>
        <dbReference type="ChEBI" id="CHEBI:74486"/>
        <dbReference type="EC" id="2.1.1.177"/>
    </reaction>
</comment>
<comment type="subunit">
    <text evidence="1">Homodimer.</text>
</comment>
<comment type="subcellular location">
    <subcellularLocation>
        <location evidence="1">Cytoplasm</location>
    </subcellularLocation>
</comment>
<comment type="similarity">
    <text evidence="1">Belongs to the RNA methyltransferase RlmH family.</text>
</comment>
<gene>
    <name evidence="1" type="primary">rlmH</name>
    <name type="ordered locus">PC1_1182</name>
</gene>
<accession>C6DBW3</accession>
<feature type="chain" id="PRO_1000212462" description="Ribosomal RNA large subunit methyltransferase H">
    <location>
        <begin position="1"/>
        <end position="156"/>
    </location>
</feature>
<feature type="binding site" evidence="1">
    <location>
        <position position="73"/>
    </location>
    <ligand>
        <name>S-adenosyl-L-methionine</name>
        <dbReference type="ChEBI" id="CHEBI:59789"/>
    </ligand>
</feature>
<feature type="binding site" evidence="1">
    <location>
        <position position="104"/>
    </location>
    <ligand>
        <name>S-adenosyl-L-methionine</name>
        <dbReference type="ChEBI" id="CHEBI:59789"/>
    </ligand>
</feature>
<feature type="binding site" evidence="1">
    <location>
        <begin position="123"/>
        <end position="128"/>
    </location>
    <ligand>
        <name>S-adenosyl-L-methionine</name>
        <dbReference type="ChEBI" id="CHEBI:59789"/>
    </ligand>
</feature>